<feature type="chain" id="PRO_0000163614" description="1-deoxy-D-xylulose 5-phosphate reductoisomerase">
    <location>
        <begin position="1"/>
        <end position="388"/>
    </location>
</feature>
<feature type="binding site" evidence="1">
    <location>
        <position position="15"/>
    </location>
    <ligand>
        <name>NADPH</name>
        <dbReference type="ChEBI" id="CHEBI:57783"/>
    </ligand>
</feature>
<feature type="binding site" evidence="1">
    <location>
        <position position="16"/>
    </location>
    <ligand>
        <name>NADPH</name>
        <dbReference type="ChEBI" id="CHEBI:57783"/>
    </ligand>
</feature>
<feature type="binding site" evidence="1">
    <location>
        <position position="17"/>
    </location>
    <ligand>
        <name>NADPH</name>
        <dbReference type="ChEBI" id="CHEBI:57783"/>
    </ligand>
</feature>
<feature type="binding site" evidence="1">
    <location>
        <position position="18"/>
    </location>
    <ligand>
        <name>NADPH</name>
        <dbReference type="ChEBI" id="CHEBI:57783"/>
    </ligand>
</feature>
<feature type="binding site" evidence="1">
    <location>
        <position position="127"/>
    </location>
    <ligand>
        <name>NADPH</name>
        <dbReference type="ChEBI" id="CHEBI:57783"/>
    </ligand>
</feature>
<feature type="binding site" evidence="1">
    <location>
        <position position="128"/>
    </location>
    <ligand>
        <name>1-deoxy-D-xylulose 5-phosphate</name>
        <dbReference type="ChEBI" id="CHEBI:57792"/>
    </ligand>
</feature>
<feature type="binding site" evidence="1">
    <location>
        <position position="129"/>
    </location>
    <ligand>
        <name>NADPH</name>
        <dbReference type="ChEBI" id="CHEBI:57783"/>
    </ligand>
</feature>
<feature type="binding site" evidence="1">
    <location>
        <position position="153"/>
    </location>
    <ligand>
        <name>Mn(2+)</name>
        <dbReference type="ChEBI" id="CHEBI:29035"/>
    </ligand>
</feature>
<feature type="binding site" evidence="1">
    <location>
        <position position="154"/>
    </location>
    <ligand>
        <name>1-deoxy-D-xylulose 5-phosphate</name>
        <dbReference type="ChEBI" id="CHEBI:57792"/>
    </ligand>
</feature>
<feature type="binding site" evidence="1">
    <location>
        <position position="155"/>
    </location>
    <ligand>
        <name>1-deoxy-D-xylulose 5-phosphate</name>
        <dbReference type="ChEBI" id="CHEBI:57792"/>
    </ligand>
</feature>
<feature type="binding site" evidence="1">
    <location>
        <position position="155"/>
    </location>
    <ligand>
        <name>Mn(2+)</name>
        <dbReference type="ChEBI" id="CHEBI:29035"/>
    </ligand>
</feature>
<feature type="binding site" evidence="1">
    <location>
        <position position="179"/>
    </location>
    <ligand>
        <name>1-deoxy-D-xylulose 5-phosphate</name>
        <dbReference type="ChEBI" id="CHEBI:57792"/>
    </ligand>
</feature>
<feature type="binding site" evidence="1">
    <location>
        <position position="202"/>
    </location>
    <ligand>
        <name>1-deoxy-D-xylulose 5-phosphate</name>
        <dbReference type="ChEBI" id="CHEBI:57792"/>
    </ligand>
</feature>
<feature type="binding site" evidence="1">
    <location>
        <position position="208"/>
    </location>
    <ligand>
        <name>NADPH</name>
        <dbReference type="ChEBI" id="CHEBI:57783"/>
    </ligand>
</feature>
<feature type="binding site" evidence="1">
    <location>
        <position position="215"/>
    </location>
    <ligand>
        <name>1-deoxy-D-xylulose 5-phosphate</name>
        <dbReference type="ChEBI" id="CHEBI:57792"/>
    </ligand>
</feature>
<feature type="binding site" evidence="1">
    <location>
        <position position="220"/>
    </location>
    <ligand>
        <name>1-deoxy-D-xylulose 5-phosphate</name>
        <dbReference type="ChEBI" id="CHEBI:57792"/>
    </ligand>
</feature>
<feature type="binding site" evidence="1">
    <location>
        <position position="221"/>
    </location>
    <ligand>
        <name>1-deoxy-D-xylulose 5-phosphate</name>
        <dbReference type="ChEBI" id="CHEBI:57792"/>
    </ligand>
</feature>
<feature type="binding site" evidence="1">
    <location>
        <position position="224"/>
    </location>
    <ligand>
        <name>1-deoxy-D-xylulose 5-phosphate</name>
        <dbReference type="ChEBI" id="CHEBI:57792"/>
    </ligand>
</feature>
<feature type="binding site" evidence="1">
    <location>
        <position position="224"/>
    </location>
    <ligand>
        <name>Mn(2+)</name>
        <dbReference type="ChEBI" id="CHEBI:29035"/>
    </ligand>
</feature>
<reference key="1">
    <citation type="journal article" date="2005" name="Science">
        <title>Extensive DNA inversions in the B. fragilis genome control variable gene expression.</title>
        <authorList>
            <person name="Cerdeno-Tarraga A.-M."/>
            <person name="Patrick S."/>
            <person name="Crossman L.C."/>
            <person name="Blakely G."/>
            <person name="Abratt V."/>
            <person name="Lennard N."/>
            <person name="Poxton I."/>
            <person name="Duerden B."/>
            <person name="Harris B."/>
            <person name="Quail M.A."/>
            <person name="Barron A."/>
            <person name="Clark L."/>
            <person name="Corton C."/>
            <person name="Doggett J."/>
            <person name="Holden M.T.G."/>
            <person name="Larke N."/>
            <person name="Line A."/>
            <person name="Lord A."/>
            <person name="Norbertczak H."/>
            <person name="Ormond D."/>
            <person name="Price C."/>
            <person name="Rabbinowitsch E."/>
            <person name="Woodward J."/>
            <person name="Barrell B.G."/>
            <person name="Parkhill J."/>
        </authorList>
    </citation>
    <scope>NUCLEOTIDE SEQUENCE [LARGE SCALE GENOMIC DNA]</scope>
    <source>
        <strain>ATCC 25285 / DSM 2151 / CCUG 4856 / JCM 11019 / LMG 10263 / NCTC 9343 / Onslow / VPI 2553 / EN-2</strain>
    </source>
</reference>
<accession>Q5L9P6</accession>
<organism>
    <name type="scientific">Bacteroides fragilis (strain ATCC 25285 / DSM 2151 / CCUG 4856 / JCM 11019 / LMG 10263 / NCTC 9343 / Onslow / VPI 2553 / EN-2)</name>
    <dbReference type="NCBI Taxonomy" id="272559"/>
    <lineage>
        <taxon>Bacteria</taxon>
        <taxon>Pseudomonadati</taxon>
        <taxon>Bacteroidota</taxon>
        <taxon>Bacteroidia</taxon>
        <taxon>Bacteroidales</taxon>
        <taxon>Bacteroidaceae</taxon>
        <taxon>Bacteroides</taxon>
    </lineage>
</organism>
<proteinExistence type="inferred from homology"/>
<keyword id="KW-0414">Isoprene biosynthesis</keyword>
<keyword id="KW-0464">Manganese</keyword>
<keyword id="KW-0479">Metal-binding</keyword>
<keyword id="KW-0521">NADP</keyword>
<keyword id="KW-0560">Oxidoreductase</keyword>
<name>DXR_BACFN</name>
<protein>
    <recommendedName>
        <fullName evidence="1">1-deoxy-D-xylulose 5-phosphate reductoisomerase</fullName>
        <shortName evidence="1">DXP reductoisomerase</shortName>
        <ecNumber evidence="1">1.1.1.267</ecNumber>
    </recommendedName>
    <alternativeName>
        <fullName evidence="1">1-deoxyxylulose-5-phosphate reductoisomerase</fullName>
    </alternativeName>
    <alternativeName>
        <fullName evidence="1">2-C-methyl-D-erythritol 4-phosphate synthase</fullName>
    </alternativeName>
</protein>
<comment type="function">
    <text evidence="1">Catalyzes the NADPH-dependent rearrangement and reduction of 1-deoxy-D-xylulose-5-phosphate (DXP) to 2-C-methyl-D-erythritol 4-phosphate (MEP).</text>
</comment>
<comment type="catalytic activity">
    <reaction evidence="1">
        <text>2-C-methyl-D-erythritol 4-phosphate + NADP(+) = 1-deoxy-D-xylulose 5-phosphate + NADPH + H(+)</text>
        <dbReference type="Rhea" id="RHEA:13717"/>
        <dbReference type="ChEBI" id="CHEBI:15378"/>
        <dbReference type="ChEBI" id="CHEBI:57783"/>
        <dbReference type="ChEBI" id="CHEBI:57792"/>
        <dbReference type="ChEBI" id="CHEBI:58262"/>
        <dbReference type="ChEBI" id="CHEBI:58349"/>
        <dbReference type="EC" id="1.1.1.267"/>
    </reaction>
    <physiologicalReaction direction="right-to-left" evidence="1">
        <dbReference type="Rhea" id="RHEA:13719"/>
    </physiologicalReaction>
</comment>
<comment type="cofactor">
    <cofactor evidence="1">
        <name>Mg(2+)</name>
        <dbReference type="ChEBI" id="CHEBI:18420"/>
    </cofactor>
    <cofactor evidence="1">
        <name>Mn(2+)</name>
        <dbReference type="ChEBI" id="CHEBI:29035"/>
    </cofactor>
</comment>
<comment type="pathway">
    <text evidence="1">Isoprenoid biosynthesis; isopentenyl diphosphate biosynthesis via DXP pathway; isopentenyl diphosphate from 1-deoxy-D-xylulose 5-phosphate: step 1/6.</text>
</comment>
<comment type="similarity">
    <text evidence="1">Belongs to the DXR family.</text>
</comment>
<evidence type="ECO:0000255" key="1">
    <source>
        <dbReference type="HAMAP-Rule" id="MF_00183"/>
    </source>
</evidence>
<dbReference type="EC" id="1.1.1.267" evidence="1"/>
<dbReference type="EMBL" id="CR626927">
    <property type="protein sequence ID" value="CAH09181.1"/>
    <property type="molecule type" value="Genomic_DNA"/>
</dbReference>
<dbReference type="RefSeq" id="WP_010993444.1">
    <property type="nucleotide sequence ID" value="NC_003228.3"/>
</dbReference>
<dbReference type="SMR" id="Q5L9P6"/>
<dbReference type="PaxDb" id="272559-BF9343_3400"/>
<dbReference type="GeneID" id="60367544"/>
<dbReference type="KEGG" id="bfs:BF9343_3400"/>
<dbReference type="eggNOG" id="COG0743">
    <property type="taxonomic scope" value="Bacteria"/>
</dbReference>
<dbReference type="HOGENOM" id="CLU_035714_4_0_10"/>
<dbReference type="UniPathway" id="UPA00056">
    <property type="reaction ID" value="UER00092"/>
</dbReference>
<dbReference type="Proteomes" id="UP000006731">
    <property type="component" value="Chromosome"/>
</dbReference>
<dbReference type="GO" id="GO:0030604">
    <property type="term" value="F:1-deoxy-D-xylulose-5-phosphate reductoisomerase activity"/>
    <property type="evidence" value="ECO:0007669"/>
    <property type="project" value="UniProtKB-UniRule"/>
</dbReference>
<dbReference type="GO" id="GO:0030145">
    <property type="term" value="F:manganese ion binding"/>
    <property type="evidence" value="ECO:0007669"/>
    <property type="project" value="TreeGrafter"/>
</dbReference>
<dbReference type="GO" id="GO:0070402">
    <property type="term" value="F:NADPH binding"/>
    <property type="evidence" value="ECO:0007669"/>
    <property type="project" value="InterPro"/>
</dbReference>
<dbReference type="GO" id="GO:0051484">
    <property type="term" value="P:isopentenyl diphosphate biosynthetic process, methylerythritol 4-phosphate pathway involved in terpenoid biosynthetic process"/>
    <property type="evidence" value="ECO:0007669"/>
    <property type="project" value="TreeGrafter"/>
</dbReference>
<dbReference type="FunFam" id="3.40.50.720:FF:000045">
    <property type="entry name" value="1-deoxy-D-xylulose 5-phosphate reductoisomerase"/>
    <property type="match status" value="1"/>
</dbReference>
<dbReference type="Gene3D" id="1.10.1740.10">
    <property type="match status" value="1"/>
</dbReference>
<dbReference type="Gene3D" id="3.40.50.720">
    <property type="entry name" value="NAD(P)-binding Rossmann-like Domain"/>
    <property type="match status" value="1"/>
</dbReference>
<dbReference type="HAMAP" id="MF_00183">
    <property type="entry name" value="DXP_reductoisom"/>
    <property type="match status" value="1"/>
</dbReference>
<dbReference type="InterPro" id="IPR003821">
    <property type="entry name" value="DXP_reductoisomerase"/>
</dbReference>
<dbReference type="InterPro" id="IPR013644">
    <property type="entry name" value="DXP_reductoisomerase_C"/>
</dbReference>
<dbReference type="InterPro" id="IPR013512">
    <property type="entry name" value="DXP_reductoisomerase_N"/>
</dbReference>
<dbReference type="InterPro" id="IPR026877">
    <property type="entry name" value="DXPR_C"/>
</dbReference>
<dbReference type="InterPro" id="IPR036169">
    <property type="entry name" value="DXPR_C_sf"/>
</dbReference>
<dbReference type="InterPro" id="IPR036291">
    <property type="entry name" value="NAD(P)-bd_dom_sf"/>
</dbReference>
<dbReference type="NCBIfam" id="TIGR00243">
    <property type="entry name" value="Dxr"/>
    <property type="match status" value="1"/>
</dbReference>
<dbReference type="NCBIfam" id="NF009114">
    <property type="entry name" value="PRK12464.1"/>
    <property type="match status" value="1"/>
</dbReference>
<dbReference type="PANTHER" id="PTHR30525">
    <property type="entry name" value="1-DEOXY-D-XYLULOSE 5-PHOSPHATE REDUCTOISOMERASE"/>
    <property type="match status" value="1"/>
</dbReference>
<dbReference type="PANTHER" id="PTHR30525:SF0">
    <property type="entry name" value="1-DEOXY-D-XYLULOSE 5-PHOSPHATE REDUCTOISOMERASE, CHLOROPLASTIC"/>
    <property type="match status" value="1"/>
</dbReference>
<dbReference type="Pfam" id="PF08436">
    <property type="entry name" value="DXP_redisom_C"/>
    <property type="match status" value="1"/>
</dbReference>
<dbReference type="Pfam" id="PF02670">
    <property type="entry name" value="DXP_reductoisom"/>
    <property type="match status" value="1"/>
</dbReference>
<dbReference type="Pfam" id="PF13288">
    <property type="entry name" value="DXPR_C"/>
    <property type="match status" value="1"/>
</dbReference>
<dbReference type="PIRSF" id="PIRSF006205">
    <property type="entry name" value="Dxp_reductismrs"/>
    <property type="match status" value="1"/>
</dbReference>
<dbReference type="SUPFAM" id="SSF69055">
    <property type="entry name" value="1-deoxy-D-xylulose-5-phosphate reductoisomerase, C-terminal domain"/>
    <property type="match status" value="1"/>
</dbReference>
<dbReference type="SUPFAM" id="SSF55347">
    <property type="entry name" value="Glyceraldehyde-3-phosphate dehydrogenase-like, C-terminal domain"/>
    <property type="match status" value="1"/>
</dbReference>
<dbReference type="SUPFAM" id="SSF51735">
    <property type="entry name" value="NAD(P)-binding Rossmann-fold domains"/>
    <property type="match status" value="1"/>
</dbReference>
<gene>
    <name evidence="1" type="primary">dxr</name>
    <name type="ordered locus">BF3492</name>
</gene>
<sequence length="388" mass="42696">MNEIKKKQIAILGSTGSIGTQALQVIEEHPELYEVYALTANNKVDLLIAQARKFMPEAVVIANEEKYAQLKEALSDLPVKVYAGAAALCQIVESGPIDVVLTAMVGYAGLKPTMNAIRAGKAIALANKETLVVAGELINQLARQYRTPILPVDSEHSAVFQCLAGEVGNPIEKVILTASGGPFRTCTMEQLKTVTKVQALKHPNWEMGAKITIDSASMMNKGFEVIEAKWLFGVQPSQIEVVVHPQSVIHSMVQFEDGAIKAQLGMPDMRLPIQYAFSYPDRINSSFDRLDFSKCTNLTFEQPDTKRFRNLALAYESMYRGGNMPCIVNAANEVVVAAFLRDEISFLGMSDVIEHTMGQVSFVQTPTYDDYVATDAEARRIARELICK</sequence>